<protein>
    <recommendedName>
        <fullName>Pro-interleukin-16</fullName>
    </recommendedName>
    <component>
        <recommendedName>
            <fullName>Interleukin-16</fullName>
            <shortName>IL-16</shortName>
        </recommendedName>
        <alternativeName>
            <fullName>Lymphocyte chemoattractant factor</fullName>
            <shortName>LCF</shortName>
        </alternativeName>
    </component>
</protein>
<organism>
    <name type="scientific">Macaca mulatta</name>
    <name type="common">Rhesus macaque</name>
    <dbReference type="NCBI Taxonomy" id="9544"/>
    <lineage>
        <taxon>Eukaryota</taxon>
        <taxon>Metazoa</taxon>
        <taxon>Chordata</taxon>
        <taxon>Craniata</taxon>
        <taxon>Vertebrata</taxon>
        <taxon>Euteleostomi</taxon>
        <taxon>Mammalia</taxon>
        <taxon>Eutheria</taxon>
        <taxon>Euarchontoglires</taxon>
        <taxon>Primates</taxon>
        <taxon>Haplorrhini</taxon>
        <taxon>Catarrhini</taxon>
        <taxon>Cercopithecidae</taxon>
        <taxon>Cercopithecinae</taxon>
        <taxon>Macaca</taxon>
    </lineage>
</organism>
<feature type="chain" id="PRO_0000377545" description="Pro-interleukin-16">
    <location>
        <begin position="1"/>
        <end position="630"/>
    </location>
</feature>
<feature type="chain" id="PRO_0000015416" description="Interleukin-16" evidence="1">
    <location>
        <begin position="510"/>
        <end position="630"/>
    </location>
</feature>
<feature type="domain" description="PDZ 1" evidence="3">
    <location>
        <begin position="410"/>
        <end position="495"/>
    </location>
</feature>
<feature type="domain" description="PDZ 2" evidence="3">
    <location>
        <begin position="532"/>
        <end position="617"/>
    </location>
</feature>
<feature type="region of interest" description="Disordered" evidence="4">
    <location>
        <begin position="30"/>
        <end position="268"/>
    </location>
</feature>
<feature type="region of interest" description="Disordered" evidence="4">
    <location>
        <begin position="316"/>
        <end position="343"/>
    </location>
</feature>
<feature type="region of interest" description="Interaction with PPP1R12A, PPP1R12B and PPP1R12C" evidence="1">
    <location>
        <begin position="404"/>
        <end position="500"/>
    </location>
</feature>
<feature type="compositionally biased region" description="Low complexity" evidence="4">
    <location>
        <begin position="129"/>
        <end position="143"/>
    </location>
</feature>
<feature type="compositionally biased region" description="Polar residues" evidence="4">
    <location>
        <begin position="321"/>
        <end position="343"/>
    </location>
</feature>
<feature type="modified residue" description="Phosphoserine" evidence="2">
    <location>
        <position position="220"/>
    </location>
</feature>
<sequence length="630" mass="66563">MDYSFDTTAEDPWVRISDCIKNLFSPIMSENPGHMPLQPNASLSEEDGTQGHPDGNPPKLDTANGTPKVYKSADRSTVKKGPPVAPKPAWFRQSLKGLRNRASDPRGLPDPALSTQPAPASREHLGPHIRASSSSSIKQRISSFETFGSSQLPDKGAQRLSLQPSSGEAAKPLGKHEGGRFSGLLGRGAAPTLVPQQPEQVLPSGSPAATEARDPGVSESPPPGLQPNQKTLPTGSDPLLRLLPTQTEKSQGPVLKMPSQRARSFPLTRSQSCETKLLDEKTSKLYSISSQVSSAVMKSLLCLPSSLSCAQTPCIPKEGASPTSSSNEDSAANGSAETSASDTGFSLNLSELREYTEGLTEAKEDDDGDHSSHQSGQSVISLLSSEELKQLIEEVKVLDEATLKQLDSIHVTILHKEEGAGLGFSLAGGADLENKVITVHKVFPNGLASQEGTIQKGNEVLSINGKSLKGTTHNDALAILRQAREPRQAVIVTRKLTAESMPDLNSTTDSAASASAASDVSVESSAEATVYTVTLEKMSAGLGFSLEGGKGSLHGDKPLTINRIFKGAASEQSETIQPGDEILQLAGTAMQGLTRFEAWNIIKALPDGPVTIVIRRKSLQPKETTAAADS</sequence>
<dbReference type="EMBL" id="AF017107">
    <property type="protein sequence ID" value="AAC16035.1"/>
    <property type="molecule type" value="mRNA"/>
</dbReference>
<dbReference type="RefSeq" id="NP_001027980.1">
    <property type="nucleotide sequence ID" value="NM_001032808.1"/>
</dbReference>
<dbReference type="SMR" id="O62675"/>
<dbReference type="STRING" id="9544.ENSMMUP00000015164"/>
<dbReference type="PaxDb" id="9544-ENSMMUP00000015164"/>
<dbReference type="GeneID" id="574100"/>
<dbReference type="KEGG" id="mcc:574100"/>
<dbReference type="CTD" id="3603"/>
<dbReference type="eggNOG" id="KOG3528">
    <property type="taxonomic scope" value="Eukaryota"/>
</dbReference>
<dbReference type="InParanoid" id="O62675"/>
<dbReference type="OrthoDB" id="42382at2759"/>
<dbReference type="Proteomes" id="UP000006718">
    <property type="component" value="Unassembled WGS sequence"/>
</dbReference>
<dbReference type="GO" id="GO:0005737">
    <property type="term" value="C:cytoplasm"/>
    <property type="evidence" value="ECO:0007669"/>
    <property type="project" value="UniProtKB-SubCell"/>
</dbReference>
<dbReference type="GO" id="GO:0005615">
    <property type="term" value="C:extracellular space"/>
    <property type="evidence" value="ECO:0007669"/>
    <property type="project" value="UniProtKB-KW"/>
</dbReference>
<dbReference type="GO" id="GO:0005634">
    <property type="term" value="C:nucleus"/>
    <property type="evidence" value="ECO:0007669"/>
    <property type="project" value="UniProtKB-SubCell"/>
</dbReference>
<dbReference type="GO" id="GO:0042609">
    <property type="term" value="F:CD4 receptor binding"/>
    <property type="evidence" value="ECO:0000318"/>
    <property type="project" value="GO_Central"/>
</dbReference>
<dbReference type="GO" id="GO:0005125">
    <property type="term" value="F:cytokine activity"/>
    <property type="evidence" value="ECO:0000318"/>
    <property type="project" value="GO_Central"/>
</dbReference>
<dbReference type="GO" id="GO:0006935">
    <property type="term" value="P:chemotaxis"/>
    <property type="evidence" value="ECO:0007669"/>
    <property type="project" value="UniProtKB-KW"/>
</dbReference>
<dbReference type="GO" id="GO:0019221">
    <property type="term" value="P:cytokine-mediated signaling pathway"/>
    <property type="evidence" value="ECO:0000318"/>
    <property type="project" value="GO_Central"/>
</dbReference>
<dbReference type="GO" id="GO:0050930">
    <property type="term" value="P:induction of positive chemotaxis"/>
    <property type="evidence" value="ECO:0007669"/>
    <property type="project" value="InterPro"/>
</dbReference>
<dbReference type="GO" id="GO:0050729">
    <property type="term" value="P:positive regulation of inflammatory response"/>
    <property type="evidence" value="ECO:0000318"/>
    <property type="project" value="GO_Central"/>
</dbReference>
<dbReference type="CDD" id="cd06762">
    <property type="entry name" value="PDZ6_PDZD2-PDZ3_hPro-IL-16-like"/>
    <property type="match status" value="1"/>
</dbReference>
<dbReference type="CDD" id="cd06763">
    <property type="entry name" value="PDZ7_PDZD2-PDZ4_hPro-IL-16-like"/>
    <property type="match status" value="1"/>
</dbReference>
<dbReference type="FunFam" id="2.30.42.10:FF:000122">
    <property type="entry name" value="Pro-interleukin-16"/>
    <property type="match status" value="1"/>
</dbReference>
<dbReference type="FunFam" id="2.30.42.10:FF:000147">
    <property type="entry name" value="Pro-interleukin-16"/>
    <property type="match status" value="1"/>
</dbReference>
<dbReference type="Gene3D" id="2.30.42.10">
    <property type="match status" value="2"/>
</dbReference>
<dbReference type="InterPro" id="IPR020450">
    <property type="entry name" value="IL-16"/>
</dbReference>
<dbReference type="InterPro" id="IPR055287">
    <property type="entry name" value="IL-16-like"/>
</dbReference>
<dbReference type="InterPro" id="IPR001478">
    <property type="entry name" value="PDZ"/>
</dbReference>
<dbReference type="InterPro" id="IPR036034">
    <property type="entry name" value="PDZ_sf"/>
</dbReference>
<dbReference type="PANTHER" id="PTHR48484">
    <property type="entry name" value="PRO-INTERLEUKIN-16"/>
    <property type="match status" value="1"/>
</dbReference>
<dbReference type="PANTHER" id="PTHR48484:SF2">
    <property type="entry name" value="PRO-INTERLEUKIN-16"/>
    <property type="match status" value="1"/>
</dbReference>
<dbReference type="Pfam" id="PF00595">
    <property type="entry name" value="PDZ"/>
    <property type="match status" value="2"/>
</dbReference>
<dbReference type="PRINTS" id="PR01931">
    <property type="entry name" value="INTRLEUKIN16"/>
</dbReference>
<dbReference type="SMART" id="SM00228">
    <property type="entry name" value="PDZ"/>
    <property type="match status" value="2"/>
</dbReference>
<dbReference type="SUPFAM" id="SSF50156">
    <property type="entry name" value="PDZ domain-like"/>
    <property type="match status" value="2"/>
</dbReference>
<dbReference type="PROSITE" id="PS50106">
    <property type="entry name" value="PDZ"/>
    <property type="match status" value="2"/>
</dbReference>
<keyword id="KW-0145">Chemotaxis</keyword>
<keyword id="KW-0202">Cytokine</keyword>
<keyword id="KW-0963">Cytoplasm</keyword>
<keyword id="KW-0539">Nucleus</keyword>
<keyword id="KW-0597">Phosphoprotein</keyword>
<keyword id="KW-1185">Reference proteome</keyword>
<keyword id="KW-0677">Repeat</keyword>
<keyword id="KW-0964">Secreted</keyword>
<keyword id="KW-0804">Transcription</keyword>
<keyword id="KW-0805">Transcription regulation</keyword>
<comment type="function">
    <text evidence="1">Interleukin-16 stimulates a migratory response in CD4+ lymphocytes, monocytes, and eosinophils. Primes CD4+ T-cells for IL-2 and IL-15 responsiveness. Also induces T-lymphocyte expression of interleukin 2 receptor. Ligand for CD4 (By similarity).</text>
</comment>
<comment type="function">
    <text evidence="1">Pro-interleukin-16 is involved in cell cycle progression in T-cells. Appears to be involved in transcriptional regulation of SKP2 and is probably part of a transcriptional repression complex on the core promoter of the SKP2 gene. May act as a scaffold for GABPB1 (the DNA-binding subunit the GABP transcription factor complex) and HDAC3 thus maintaining transcriptional repression and blocking cell cycle progression in resting T-cells (By similarity).</text>
</comment>
<comment type="subunit">
    <text evidence="1 5">Homotetramer (Probable). Pro-interleukin-16 interacts (via PDZ 2 domain) with PPP1R12A, PPP1R12B and PPP1R12C. Pro-interleukin-16 interacts with GRIN2A. Pro-interleukin-16 interacts with GABPB1. Pro-interleukin-16 interacts (via PDZ 3 domain) with HDAC3 (By similarity).</text>
</comment>
<comment type="subcellular location">
    <molecule>Interleukin-16</molecule>
    <subcellularLocation>
        <location evidence="1">Secreted</location>
    </subcellularLocation>
</comment>
<comment type="subcellular location">
    <molecule>Pro-interleukin-16</molecule>
    <subcellularLocation>
        <location>Cytoplasm</location>
    </subcellularLocation>
    <subcellularLocation>
        <location evidence="1">Nucleus</location>
    </subcellularLocation>
</comment>
<evidence type="ECO:0000250" key="1"/>
<evidence type="ECO:0000250" key="2">
    <source>
        <dbReference type="UniProtKB" id="Q14005"/>
    </source>
</evidence>
<evidence type="ECO:0000255" key="3">
    <source>
        <dbReference type="PROSITE-ProRule" id="PRU00143"/>
    </source>
</evidence>
<evidence type="ECO:0000256" key="4">
    <source>
        <dbReference type="SAM" id="MobiDB-lite"/>
    </source>
</evidence>
<evidence type="ECO:0000305" key="5"/>
<reference key="1">
    <citation type="journal article" date="1998" name="Immunogenetics">
        <title>Molecular cloning and sequence analysis of interleukin 16 from nonhuman primates and from the mouse.</title>
        <authorList>
            <person name="Bannert N."/>
            <person name="Adler H.S."/>
            <person name="Werner A."/>
            <person name="Baier M."/>
            <person name="Kurth R."/>
        </authorList>
    </citation>
    <scope>NUCLEOTIDE SEQUENCE [MRNA]</scope>
</reference>
<accession>O62675</accession>
<gene>
    <name type="primary">IL16</name>
</gene>
<name>IL16_MACMU</name>
<proteinExistence type="evidence at transcript level"/>